<proteinExistence type="inferred from homology"/>
<dbReference type="EMBL" id="AE004091">
    <property type="protein sequence ID" value="AAG08578.1"/>
    <property type="molecule type" value="Genomic_DNA"/>
</dbReference>
<dbReference type="PIR" id="H82996">
    <property type="entry name" value="H82996"/>
</dbReference>
<dbReference type="RefSeq" id="WP_003096245.1">
    <property type="nucleotide sequence ID" value="NZ_QZGE01000002.1"/>
</dbReference>
<dbReference type="SMR" id="Q9HTZ6"/>
<dbReference type="FunCoup" id="Q9HTZ6">
    <property type="interactions" value="341"/>
</dbReference>
<dbReference type="STRING" id="208964.PA5193"/>
<dbReference type="PaxDb" id="208964-PA5193"/>
<dbReference type="DNASU" id="879313"/>
<dbReference type="KEGG" id="pae:PA5193"/>
<dbReference type="PATRIC" id="fig|208964.12.peg.5443"/>
<dbReference type="PseudoCAP" id="PA5193"/>
<dbReference type="HOGENOM" id="CLU_054493_0_0_6"/>
<dbReference type="InParanoid" id="Q9HTZ6"/>
<dbReference type="OrthoDB" id="9793753at2"/>
<dbReference type="PhylomeDB" id="Q9HTZ6"/>
<dbReference type="BioCyc" id="PAER208964:G1FZ6-5312-MONOMER"/>
<dbReference type="Proteomes" id="UP000002438">
    <property type="component" value="Chromosome"/>
</dbReference>
<dbReference type="GO" id="GO:0005737">
    <property type="term" value="C:cytoplasm"/>
    <property type="evidence" value="ECO:0000318"/>
    <property type="project" value="GO_Central"/>
</dbReference>
<dbReference type="GO" id="GO:0044183">
    <property type="term" value="F:protein folding chaperone"/>
    <property type="evidence" value="ECO:0000318"/>
    <property type="project" value="GO_Central"/>
</dbReference>
<dbReference type="GO" id="GO:0051082">
    <property type="term" value="F:unfolded protein binding"/>
    <property type="evidence" value="ECO:0007669"/>
    <property type="project" value="UniProtKB-UniRule"/>
</dbReference>
<dbReference type="GO" id="GO:0042026">
    <property type="term" value="P:protein refolding"/>
    <property type="evidence" value="ECO:0000318"/>
    <property type="project" value="GO_Central"/>
</dbReference>
<dbReference type="CDD" id="cd00498">
    <property type="entry name" value="Hsp33"/>
    <property type="match status" value="1"/>
</dbReference>
<dbReference type="Gene3D" id="1.10.287.480">
    <property type="entry name" value="helix hairpin bin"/>
    <property type="match status" value="1"/>
</dbReference>
<dbReference type="Gene3D" id="3.55.30.10">
    <property type="entry name" value="Hsp33 domain"/>
    <property type="match status" value="1"/>
</dbReference>
<dbReference type="Gene3D" id="3.90.1280.10">
    <property type="entry name" value="HSP33 redox switch-like"/>
    <property type="match status" value="1"/>
</dbReference>
<dbReference type="HAMAP" id="MF_00117">
    <property type="entry name" value="HslO"/>
    <property type="match status" value="1"/>
</dbReference>
<dbReference type="InterPro" id="IPR000397">
    <property type="entry name" value="Heat_shock_Hsp33"/>
</dbReference>
<dbReference type="InterPro" id="IPR016154">
    <property type="entry name" value="Heat_shock_Hsp33_C"/>
</dbReference>
<dbReference type="InterPro" id="IPR016153">
    <property type="entry name" value="Heat_shock_Hsp33_N"/>
</dbReference>
<dbReference type="InterPro" id="IPR023212">
    <property type="entry name" value="Hsp33_helix_hairpin_bin_dom_sf"/>
</dbReference>
<dbReference type="NCBIfam" id="NF001033">
    <property type="entry name" value="PRK00114.1"/>
    <property type="match status" value="1"/>
</dbReference>
<dbReference type="PANTHER" id="PTHR30111">
    <property type="entry name" value="33 KDA CHAPERONIN"/>
    <property type="match status" value="1"/>
</dbReference>
<dbReference type="PANTHER" id="PTHR30111:SF1">
    <property type="entry name" value="33 KDA CHAPERONIN"/>
    <property type="match status" value="1"/>
</dbReference>
<dbReference type="Pfam" id="PF01430">
    <property type="entry name" value="HSP33"/>
    <property type="match status" value="1"/>
</dbReference>
<dbReference type="PIRSF" id="PIRSF005261">
    <property type="entry name" value="Heat_shock_Hsp33"/>
    <property type="match status" value="1"/>
</dbReference>
<dbReference type="SUPFAM" id="SSF64397">
    <property type="entry name" value="Hsp33 domain"/>
    <property type="match status" value="1"/>
</dbReference>
<dbReference type="SUPFAM" id="SSF118352">
    <property type="entry name" value="HSP33 redox switch-like"/>
    <property type="match status" value="1"/>
</dbReference>
<comment type="function">
    <text evidence="1">Redox regulated molecular chaperone. Protects both thermally unfolding and oxidatively damaged proteins from irreversible aggregation. Plays an important role in the bacterial defense system toward oxidative stress.</text>
</comment>
<comment type="subcellular location">
    <subcellularLocation>
        <location evidence="1">Cytoplasm</location>
    </subcellularLocation>
</comment>
<comment type="PTM">
    <text evidence="1">Under oxidizing conditions two disulfide bonds are formed involving the reactive cysteines. Under reducing conditions zinc is bound to the reactive cysteines and the protein is inactive.</text>
</comment>
<comment type="similarity">
    <text evidence="1">Belongs to the HSP33 family.</text>
</comment>
<organism>
    <name type="scientific">Pseudomonas aeruginosa (strain ATCC 15692 / DSM 22644 / CIP 104116 / JCM 14847 / LMG 12228 / 1C / PRS 101 / PAO1)</name>
    <dbReference type="NCBI Taxonomy" id="208964"/>
    <lineage>
        <taxon>Bacteria</taxon>
        <taxon>Pseudomonadati</taxon>
        <taxon>Pseudomonadota</taxon>
        <taxon>Gammaproteobacteria</taxon>
        <taxon>Pseudomonadales</taxon>
        <taxon>Pseudomonadaceae</taxon>
        <taxon>Pseudomonas</taxon>
    </lineage>
</organism>
<accession>Q9HTZ6</accession>
<keyword id="KW-0143">Chaperone</keyword>
<keyword id="KW-0963">Cytoplasm</keyword>
<keyword id="KW-1015">Disulfide bond</keyword>
<keyword id="KW-0676">Redox-active center</keyword>
<keyword id="KW-1185">Reference proteome</keyword>
<keyword id="KW-0862">Zinc</keyword>
<protein>
    <recommendedName>
        <fullName evidence="1">33 kDa chaperonin</fullName>
    </recommendedName>
    <alternativeName>
        <fullName evidence="1">Heat shock protein 33 homolog</fullName>
        <shortName evidence="1">HSP33</shortName>
    </alternativeName>
</protein>
<name>HSLO_PSEAE</name>
<reference key="1">
    <citation type="journal article" date="2000" name="Nature">
        <title>Complete genome sequence of Pseudomonas aeruginosa PAO1, an opportunistic pathogen.</title>
        <authorList>
            <person name="Stover C.K."/>
            <person name="Pham X.-Q.T."/>
            <person name="Erwin A.L."/>
            <person name="Mizoguchi S.D."/>
            <person name="Warrener P."/>
            <person name="Hickey M.J."/>
            <person name="Brinkman F.S.L."/>
            <person name="Hufnagle W.O."/>
            <person name="Kowalik D.J."/>
            <person name="Lagrou M."/>
            <person name="Garber R.L."/>
            <person name="Goltry L."/>
            <person name="Tolentino E."/>
            <person name="Westbrock-Wadman S."/>
            <person name="Yuan Y."/>
            <person name="Brody L.L."/>
            <person name="Coulter S.N."/>
            <person name="Folger K.R."/>
            <person name="Kas A."/>
            <person name="Larbig K."/>
            <person name="Lim R.M."/>
            <person name="Smith K.A."/>
            <person name="Spencer D.H."/>
            <person name="Wong G.K.-S."/>
            <person name="Wu Z."/>
            <person name="Paulsen I.T."/>
            <person name="Reizer J."/>
            <person name="Saier M.H. Jr."/>
            <person name="Hancock R.E.W."/>
            <person name="Lory S."/>
            <person name="Olson M.V."/>
        </authorList>
    </citation>
    <scope>NUCLEOTIDE SEQUENCE [LARGE SCALE GENOMIC DNA]</scope>
    <source>
        <strain>ATCC 15692 / DSM 22644 / CIP 104116 / JCM 14847 / LMG 12228 / 1C / PRS 101 / PAO1</strain>
    </source>
</reference>
<sequence>MSHSDQSQRFLFDDTDVRGEMVDLERSYSEVLAKHPYPEPVAQLLGEMLAAASLLCGTLKFDGLLVLQARSSGAVPLLMVECSSDRQVRGLARYSAESIGADAGMQELMPEGVLTLTVDPVKGQRYQGIVALEGVNLAECLSNYFASSEQLPTRFWLNANGRRARGLLLQQLPADRLKDPEAREASWQHLTTLADTLTAEELLALDNETVLHRLYHEETVRLFEPQPLVFHCSCSRERSANALVSLGQADCERLLEEEEGSISIDCQFCNQRYLFDASDVAQLFAGAGSQGPSETRH</sequence>
<gene>
    <name evidence="1" type="primary">hslO</name>
    <name type="ordered locus">PA5193</name>
</gene>
<feature type="chain" id="PRO_0000192193" description="33 kDa chaperonin">
    <location>
        <begin position="1"/>
        <end position="297"/>
    </location>
</feature>
<feature type="disulfide bond" description="Redox-active" evidence="1">
    <location>
        <begin position="232"/>
        <end position="234"/>
    </location>
</feature>
<feature type="disulfide bond" description="Redox-active" evidence="1">
    <location>
        <begin position="266"/>
        <end position="269"/>
    </location>
</feature>
<evidence type="ECO:0000255" key="1">
    <source>
        <dbReference type="HAMAP-Rule" id="MF_00117"/>
    </source>
</evidence>